<protein>
    <recommendedName>
        <fullName evidence="1">Large ribosomal subunit protein uL10</fullName>
    </recommendedName>
    <alternativeName>
        <fullName evidence="2">50S ribosomal protein L10</fullName>
    </alternativeName>
</protein>
<gene>
    <name evidence="1" type="primary">rplJ</name>
    <name type="ordered locus">BCG_0700</name>
</gene>
<reference key="1">
    <citation type="journal article" date="2007" name="Proc. Natl. Acad. Sci. U.S.A.">
        <title>Genome plasticity of BCG and impact on vaccine efficacy.</title>
        <authorList>
            <person name="Brosch R."/>
            <person name="Gordon S.V."/>
            <person name="Garnier T."/>
            <person name="Eiglmeier K."/>
            <person name="Frigui W."/>
            <person name="Valenti P."/>
            <person name="Dos Santos S."/>
            <person name="Duthoy S."/>
            <person name="Lacroix C."/>
            <person name="Garcia-Pelayo C."/>
            <person name="Inwald J.K."/>
            <person name="Golby P."/>
            <person name="Garcia J.N."/>
            <person name="Hewinson R.G."/>
            <person name="Behr M.A."/>
            <person name="Quail M.A."/>
            <person name="Churcher C."/>
            <person name="Barrell B.G."/>
            <person name="Parkhill J."/>
            <person name="Cole S.T."/>
        </authorList>
    </citation>
    <scope>NUCLEOTIDE SEQUENCE [LARGE SCALE GENOMIC DNA]</scope>
    <source>
        <strain>BCG / Pasteur 1173P2</strain>
    </source>
</reference>
<accession>A1KGD1</accession>
<organism>
    <name type="scientific">Mycobacterium bovis (strain BCG / Pasteur 1173P2)</name>
    <dbReference type="NCBI Taxonomy" id="410289"/>
    <lineage>
        <taxon>Bacteria</taxon>
        <taxon>Bacillati</taxon>
        <taxon>Actinomycetota</taxon>
        <taxon>Actinomycetes</taxon>
        <taxon>Mycobacteriales</taxon>
        <taxon>Mycobacteriaceae</taxon>
        <taxon>Mycobacterium</taxon>
        <taxon>Mycobacterium tuberculosis complex</taxon>
    </lineage>
</organism>
<proteinExistence type="inferred from homology"/>
<name>RL10_MYCBP</name>
<comment type="function">
    <text evidence="1">Forms part of the ribosomal stalk, playing a central role in the interaction of the ribosome with GTP-bound translation factors.</text>
</comment>
<comment type="subunit">
    <text evidence="1">Part of the ribosomal stalk of the 50S ribosomal subunit. The N-terminus interacts with L11 and the large rRNA to form the base of the stalk. The C-terminus forms an elongated spine to which L12 dimers bind in a sequential fashion forming a multimeric L10(L12)X complex.</text>
</comment>
<comment type="similarity">
    <text evidence="1">Belongs to the universal ribosomal protein uL10 family.</text>
</comment>
<evidence type="ECO:0000255" key="1">
    <source>
        <dbReference type="HAMAP-Rule" id="MF_00362"/>
    </source>
</evidence>
<evidence type="ECO:0000305" key="2"/>
<dbReference type="EMBL" id="AM408590">
    <property type="protein sequence ID" value="CAL70686.1"/>
    <property type="molecule type" value="Genomic_DNA"/>
</dbReference>
<dbReference type="RefSeq" id="WP_003403341.1">
    <property type="nucleotide sequence ID" value="NC_008769.1"/>
</dbReference>
<dbReference type="SMR" id="A1KGD1"/>
<dbReference type="GeneID" id="45424611"/>
<dbReference type="KEGG" id="mbb:BCG_0700"/>
<dbReference type="HOGENOM" id="CLU_092227_1_0_11"/>
<dbReference type="Proteomes" id="UP000001472">
    <property type="component" value="Chromosome"/>
</dbReference>
<dbReference type="GO" id="GO:0015934">
    <property type="term" value="C:large ribosomal subunit"/>
    <property type="evidence" value="ECO:0007669"/>
    <property type="project" value="InterPro"/>
</dbReference>
<dbReference type="GO" id="GO:0070180">
    <property type="term" value="F:large ribosomal subunit rRNA binding"/>
    <property type="evidence" value="ECO:0007669"/>
    <property type="project" value="UniProtKB-UniRule"/>
</dbReference>
<dbReference type="GO" id="GO:0003735">
    <property type="term" value="F:structural constituent of ribosome"/>
    <property type="evidence" value="ECO:0007669"/>
    <property type="project" value="InterPro"/>
</dbReference>
<dbReference type="GO" id="GO:0006412">
    <property type="term" value="P:translation"/>
    <property type="evidence" value="ECO:0007669"/>
    <property type="project" value="UniProtKB-UniRule"/>
</dbReference>
<dbReference type="CDD" id="cd05797">
    <property type="entry name" value="Ribosomal_L10"/>
    <property type="match status" value="1"/>
</dbReference>
<dbReference type="FunFam" id="3.30.70.1730:FF:000003">
    <property type="entry name" value="50S ribosomal protein L10"/>
    <property type="match status" value="1"/>
</dbReference>
<dbReference type="Gene3D" id="3.30.70.1730">
    <property type="match status" value="1"/>
</dbReference>
<dbReference type="Gene3D" id="6.10.250.290">
    <property type="match status" value="1"/>
</dbReference>
<dbReference type="HAMAP" id="MF_00362">
    <property type="entry name" value="Ribosomal_uL10"/>
    <property type="match status" value="1"/>
</dbReference>
<dbReference type="InterPro" id="IPR001790">
    <property type="entry name" value="Ribosomal_uL10"/>
</dbReference>
<dbReference type="InterPro" id="IPR043141">
    <property type="entry name" value="Ribosomal_uL10-like_sf"/>
</dbReference>
<dbReference type="InterPro" id="IPR022973">
    <property type="entry name" value="Ribosomal_uL10_bac"/>
</dbReference>
<dbReference type="InterPro" id="IPR047865">
    <property type="entry name" value="Ribosomal_uL10_bac_type"/>
</dbReference>
<dbReference type="InterPro" id="IPR002363">
    <property type="entry name" value="Ribosomal_uL10_CS_bac"/>
</dbReference>
<dbReference type="NCBIfam" id="NF000955">
    <property type="entry name" value="PRK00099.1-1"/>
    <property type="match status" value="1"/>
</dbReference>
<dbReference type="PANTHER" id="PTHR11560">
    <property type="entry name" value="39S RIBOSOMAL PROTEIN L10, MITOCHONDRIAL"/>
    <property type="match status" value="1"/>
</dbReference>
<dbReference type="Pfam" id="PF00466">
    <property type="entry name" value="Ribosomal_L10"/>
    <property type="match status" value="1"/>
</dbReference>
<dbReference type="SUPFAM" id="SSF160369">
    <property type="entry name" value="Ribosomal protein L10-like"/>
    <property type="match status" value="1"/>
</dbReference>
<dbReference type="PROSITE" id="PS01109">
    <property type="entry name" value="RIBOSOMAL_L10"/>
    <property type="match status" value="1"/>
</dbReference>
<keyword id="KW-0687">Ribonucleoprotein</keyword>
<keyword id="KW-0689">Ribosomal protein</keyword>
<keyword id="KW-0694">RNA-binding</keyword>
<keyword id="KW-0699">rRNA-binding</keyword>
<feature type="chain" id="PRO_1000005535" description="Large ribosomal subunit protein uL10">
    <location>
        <begin position="1"/>
        <end position="178"/>
    </location>
</feature>
<sequence>MARADKATAVADIAAQFKESTATLITEYRGLTVANLAELRRSLTGSATYAVAKNTLIKRAASEAGIEGLDELFVGPTAIAFVTGEPVDAAKAIKTFAKEHKALVIKGGYMDGHPLTVAEVERIADLESREVLLAKLAGAMKGNLAKAAGLFNAPASQLARLAAALQEKKACPGPDSAE</sequence>